<sequence length="208" mass="23423">MARYIGPSCKLARREGADLSLKSPSRALDSKCKLEQRPGQHGAVRKSKLSDYASQLREKQKVKRIYGVLERQFRNYYKNASTKKGNTGENLLQLLETRLDNVIYRMGFAVTRPAARQLVSHRGVLVNGKIVNLPSYHVKPGDIVALSQRAQKYLCVQESLTIKDQHGSAFSWVEVDSEKFSGVFKALPDRADLPSDINEALIVELYSK</sequence>
<accession>B0U5M2</accession>
<evidence type="ECO:0000255" key="1">
    <source>
        <dbReference type="HAMAP-Rule" id="MF_01306"/>
    </source>
</evidence>
<evidence type="ECO:0000305" key="2"/>
<reference key="1">
    <citation type="journal article" date="2010" name="J. Bacteriol.">
        <title>Whole genome sequences of two Xylella fastidiosa strains (M12 and M23) causing almond leaf scorch disease in California.</title>
        <authorList>
            <person name="Chen J."/>
            <person name="Xie G."/>
            <person name="Han S."/>
            <person name="Chertkov O."/>
            <person name="Sims D."/>
            <person name="Civerolo E.L."/>
        </authorList>
    </citation>
    <scope>NUCLEOTIDE SEQUENCE [LARGE SCALE GENOMIC DNA]</scope>
    <source>
        <strain>M12</strain>
    </source>
</reference>
<proteinExistence type="inferred from homology"/>
<organism>
    <name type="scientific">Xylella fastidiosa (strain M12)</name>
    <dbReference type="NCBI Taxonomy" id="405440"/>
    <lineage>
        <taxon>Bacteria</taxon>
        <taxon>Pseudomonadati</taxon>
        <taxon>Pseudomonadota</taxon>
        <taxon>Gammaproteobacteria</taxon>
        <taxon>Lysobacterales</taxon>
        <taxon>Lysobacteraceae</taxon>
        <taxon>Xylella</taxon>
    </lineage>
</organism>
<feature type="chain" id="PRO_1000140821" description="Small ribosomal subunit protein uS4">
    <location>
        <begin position="1"/>
        <end position="208"/>
    </location>
</feature>
<feature type="domain" description="S4 RNA-binding" evidence="1">
    <location>
        <begin position="97"/>
        <end position="158"/>
    </location>
</feature>
<dbReference type="EMBL" id="CP000941">
    <property type="protein sequence ID" value="ACA11526.1"/>
    <property type="molecule type" value="Genomic_DNA"/>
</dbReference>
<dbReference type="RefSeq" id="WP_004086544.1">
    <property type="nucleotide sequence ID" value="NC_010513.1"/>
</dbReference>
<dbReference type="SMR" id="B0U5M2"/>
<dbReference type="KEGG" id="xfm:Xfasm12_0517"/>
<dbReference type="HOGENOM" id="CLU_092403_0_2_6"/>
<dbReference type="GO" id="GO:0015935">
    <property type="term" value="C:small ribosomal subunit"/>
    <property type="evidence" value="ECO:0007669"/>
    <property type="project" value="InterPro"/>
</dbReference>
<dbReference type="GO" id="GO:0019843">
    <property type="term" value="F:rRNA binding"/>
    <property type="evidence" value="ECO:0007669"/>
    <property type="project" value="UniProtKB-UniRule"/>
</dbReference>
<dbReference type="GO" id="GO:0003735">
    <property type="term" value="F:structural constituent of ribosome"/>
    <property type="evidence" value="ECO:0007669"/>
    <property type="project" value="InterPro"/>
</dbReference>
<dbReference type="GO" id="GO:0042274">
    <property type="term" value="P:ribosomal small subunit biogenesis"/>
    <property type="evidence" value="ECO:0007669"/>
    <property type="project" value="TreeGrafter"/>
</dbReference>
<dbReference type="GO" id="GO:0006412">
    <property type="term" value="P:translation"/>
    <property type="evidence" value="ECO:0007669"/>
    <property type="project" value="UniProtKB-UniRule"/>
</dbReference>
<dbReference type="CDD" id="cd00165">
    <property type="entry name" value="S4"/>
    <property type="match status" value="1"/>
</dbReference>
<dbReference type="FunFam" id="1.10.1050.10:FF:000001">
    <property type="entry name" value="30S ribosomal protein S4"/>
    <property type="match status" value="1"/>
</dbReference>
<dbReference type="FunFam" id="3.10.290.10:FF:000001">
    <property type="entry name" value="30S ribosomal protein S4"/>
    <property type="match status" value="1"/>
</dbReference>
<dbReference type="Gene3D" id="1.10.1050.10">
    <property type="entry name" value="Ribosomal Protein S4 Delta 41, Chain A, domain 1"/>
    <property type="match status" value="1"/>
</dbReference>
<dbReference type="Gene3D" id="3.10.290.10">
    <property type="entry name" value="RNA-binding S4 domain"/>
    <property type="match status" value="1"/>
</dbReference>
<dbReference type="HAMAP" id="MF_01306_B">
    <property type="entry name" value="Ribosomal_uS4_B"/>
    <property type="match status" value="1"/>
</dbReference>
<dbReference type="InterPro" id="IPR022801">
    <property type="entry name" value="Ribosomal_uS4"/>
</dbReference>
<dbReference type="InterPro" id="IPR005709">
    <property type="entry name" value="Ribosomal_uS4_bac-type"/>
</dbReference>
<dbReference type="InterPro" id="IPR018079">
    <property type="entry name" value="Ribosomal_uS4_CS"/>
</dbReference>
<dbReference type="InterPro" id="IPR001912">
    <property type="entry name" value="Ribosomal_uS4_N"/>
</dbReference>
<dbReference type="InterPro" id="IPR002942">
    <property type="entry name" value="S4_RNA-bd"/>
</dbReference>
<dbReference type="InterPro" id="IPR036986">
    <property type="entry name" value="S4_RNA-bd_sf"/>
</dbReference>
<dbReference type="NCBIfam" id="NF003717">
    <property type="entry name" value="PRK05327.1"/>
    <property type="match status" value="1"/>
</dbReference>
<dbReference type="NCBIfam" id="TIGR01017">
    <property type="entry name" value="rpsD_bact"/>
    <property type="match status" value="1"/>
</dbReference>
<dbReference type="PANTHER" id="PTHR11831">
    <property type="entry name" value="30S 40S RIBOSOMAL PROTEIN"/>
    <property type="match status" value="1"/>
</dbReference>
<dbReference type="PANTHER" id="PTHR11831:SF4">
    <property type="entry name" value="SMALL RIBOSOMAL SUBUNIT PROTEIN US4M"/>
    <property type="match status" value="1"/>
</dbReference>
<dbReference type="Pfam" id="PF00163">
    <property type="entry name" value="Ribosomal_S4"/>
    <property type="match status" value="1"/>
</dbReference>
<dbReference type="Pfam" id="PF01479">
    <property type="entry name" value="S4"/>
    <property type="match status" value="1"/>
</dbReference>
<dbReference type="SMART" id="SM01390">
    <property type="entry name" value="Ribosomal_S4"/>
    <property type="match status" value="1"/>
</dbReference>
<dbReference type="SMART" id="SM00363">
    <property type="entry name" value="S4"/>
    <property type="match status" value="1"/>
</dbReference>
<dbReference type="SUPFAM" id="SSF55174">
    <property type="entry name" value="Alpha-L RNA-binding motif"/>
    <property type="match status" value="1"/>
</dbReference>
<dbReference type="PROSITE" id="PS00632">
    <property type="entry name" value="RIBOSOMAL_S4"/>
    <property type="match status" value="1"/>
</dbReference>
<dbReference type="PROSITE" id="PS50889">
    <property type="entry name" value="S4"/>
    <property type="match status" value="1"/>
</dbReference>
<gene>
    <name evidence="1" type="primary">rpsD</name>
    <name type="ordered locus">Xfasm12_0517</name>
</gene>
<keyword id="KW-0687">Ribonucleoprotein</keyword>
<keyword id="KW-0689">Ribosomal protein</keyword>
<keyword id="KW-0694">RNA-binding</keyword>
<keyword id="KW-0699">rRNA-binding</keyword>
<name>RS4_XYLFM</name>
<comment type="function">
    <text evidence="1">One of the primary rRNA binding proteins, it binds directly to 16S rRNA where it nucleates assembly of the body of the 30S subunit.</text>
</comment>
<comment type="function">
    <text evidence="1">With S5 and S12 plays an important role in translational accuracy.</text>
</comment>
<comment type="subunit">
    <text evidence="1">Part of the 30S ribosomal subunit. Contacts protein S5. The interaction surface between S4 and S5 is involved in control of translational fidelity.</text>
</comment>
<comment type="similarity">
    <text evidence="1">Belongs to the universal ribosomal protein uS4 family.</text>
</comment>
<protein>
    <recommendedName>
        <fullName evidence="1">Small ribosomal subunit protein uS4</fullName>
    </recommendedName>
    <alternativeName>
        <fullName evidence="2">30S ribosomal protein S4</fullName>
    </alternativeName>
</protein>